<evidence type="ECO:0000250" key="1"/>
<evidence type="ECO:0000256" key="2">
    <source>
        <dbReference type="SAM" id="MobiDB-lite"/>
    </source>
</evidence>
<accession>Q6PBT9</accession>
<name>Z385B_DANRE</name>
<protein>
    <recommendedName>
        <fullName>Zinc finger protein 385B</fullName>
    </recommendedName>
    <alternativeName>
        <fullName>Zinc finger protein 533</fullName>
    </alternativeName>
</protein>
<comment type="function">
    <text evidence="1">May play a role in p53/TP53-mediated apoptosis.</text>
</comment>
<comment type="subcellular location">
    <subcellularLocation>
        <location evidence="1">Nucleus</location>
    </subcellularLocation>
</comment>
<reference key="1">
    <citation type="submission" date="2003-10" db="EMBL/GenBank/DDBJ databases">
        <authorList>
            <consortium name="NIH - Zebrafish Gene Collection (ZGC) project"/>
        </authorList>
    </citation>
    <scope>NUCLEOTIDE SEQUENCE [LARGE SCALE MRNA]</scope>
    <source>
        <tissue>Retina</tissue>
    </source>
</reference>
<organism>
    <name type="scientific">Danio rerio</name>
    <name type="common">Zebrafish</name>
    <name type="synonym">Brachydanio rerio</name>
    <dbReference type="NCBI Taxonomy" id="7955"/>
    <lineage>
        <taxon>Eukaryota</taxon>
        <taxon>Metazoa</taxon>
        <taxon>Chordata</taxon>
        <taxon>Craniata</taxon>
        <taxon>Vertebrata</taxon>
        <taxon>Euteleostomi</taxon>
        <taxon>Actinopterygii</taxon>
        <taxon>Neopterygii</taxon>
        <taxon>Teleostei</taxon>
        <taxon>Ostariophysi</taxon>
        <taxon>Cypriniformes</taxon>
        <taxon>Danionidae</taxon>
        <taxon>Danioninae</taxon>
        <taxon>Danio</taxon>
    </lineage>
</organism>
<dbReference type="EMBL" id="BC059587">
    <property type="protein sequence ID" value="AAH59587.1"/>
    <property type="molecule type" value="mRNA"/>
</dbReference>
<dbReference type="FunCoup" id="Q6PBT9">
    <property type="interactions" value="479"/>
</dbReference>
<dbReference type="STRING" id="7955.ENSDARP00000122712"/>
<dbReference type="PaxDb" id="7955-ENSDARP00000059445"/>
<dbReference type="AGR" id="ZFIN:ZDB-GENE-030616-154"/>
<dbReference type="ZFIN" id="ZDB-GENE-030616-154">
    <property type="gene designation" value="znf385b"/>
</dbReference>
<dbReference type="eggNOG" id="ENOG502QS7G">
    <property type="taxonomic scope" value="Eukaryota"/>
</dbReference>
<dbReference type="InParanoid" id="Q6PBT9"/>
<dbReference type="PhylomeDB" id="Q6PBT9"/>
<dbReference type="PRO" id="PR:Q6PBT9"/>
<dbReference type="Proteomes" id="UP000000437">
    <property type="component" value="Unplaced"/>
</dbReference>
<dbReference type="GO" id="GO:0005634">
    <property type="term" value="C:nucleus"/>
    <property type="evidence" value="ECO:0000250"/>
    <property type="project" value="UniProtKB"/>
</dbReference>
<dbReference type="GO" id="GO:0003676">
    <property type="term" value="F:nucleic acid binding"/>
    <property type="evidence" value="ECO:0007669"/>
    <property type="project" value="InterPro"/>
</dbReference>
<dbReference type="GO" id="GO:0008270">
    <property type="term" value="F:zinc ion binding"/>
    <property type="evidence" value="ECO:0007669"/>
    <property type="project" value="UniProtKB-KW"/>
</dbReference>
<dbReference type="GO" id="GO:0072332">
    <property type="term" value="P:intrinsic apoptotic signaling pathway by p53 class mediator"/>
    <property type="evidence" value="ECO:0000250"/>
    <property type="project" value="UniProtKB"/>
</dbReference>
<dbReference type="FunFam" id="3.30.160.60:FF:000276">
    <property type="entry name" value="zinc finger protein 385A isoform X3"/>
    <property type="match status" value="1"/>
</dbReference>
<dbReference type="FunFam" id="3.30.160.60:FF:000121">
    <property type="entry name" value="zinc finger protein 385B isoform X1"/>
    <property type="match status" value="1"/>
</dbReference>
<dbReference type="FunFam" id="3.30.160.60:FF:000779">
    <property type="entry name" value="zinc finger protein 385B isoform X1"/>
    <property type="match status" value="1"/>
</dbReference>
<dbReference type="Gene3D" id="3.30.160.60">
    <property type="entry name" value="Classic Zinc Finger"/>
    <property type="match status" value="4"/>
</dbReference>
<dbReference type="InterPro" id="IPR003604">
    <property type="entry name" value="Matrin/U1-like-C_Znf_C2H2"/>
</dbReference>
<dbReference type="InterPro" id="IPR051845">
    <property type="entry name" value="Znf385"/>
</dbReference>
<dbReference type="InterPro" id="IPR036236">
    <property type="entry name" value="Znf_C2H2_sf"/>
</dbReference>
<dbReference type="InterPro" id="IPR013087">
    <property type="entry name" value="Znf_C2H2_type"/>
</dbReference>
<dbReference type="PANTHER" id="PTHR23067">
    <property type="entry name" value="DOUBLE-STRANDED RNA-BINDING ZINC FINGER PROTEIN"/>
    <property type="match status" value="1"/>
</dbReference>
<dbReference type="PANTHER" id="PTHR23067:SF8">
    <property type="entry name" value="ZINC FINGER PROTEIN 385B"/>
    <property type="match status" value="1"/>
</dbReference>
<dbReference type="Pfam" id="PF12874">
    <property type="entry name" value="zf-met"/>
    <property type="match status" value="4"/>
</dbReference>
<dbReference type="SMART" id="SM00355">
    <property type="entry name" value="ZnF_C2H2"/>
    <property type="match status" value="4"/>
</dbReference>
<dbReference type="SMART" id="SM00451">
    <property type="entry name" value="ZnF_U1"/>
    <property type="match status" value="4"/>
</dbReference>
<dbReference type="SUPFAM" id="SSF57667">
    <property type="entry name" value="beta-beta-alpha zinc fingers"/>
    <property type="match status" value="4"/>
</dbReference>
<keyword id="KW-0053">Apoptosis</keyword>
<keyword id="KW-0479">Metal-binding</keyword>
<keyword id="KW-0539">Nucleus</keyword>
<keyword id="KW-1185">Reference proteome</keyword>
<keyword id="KW-0677">Repeat</keyword>
<keyword id="KW-0862">Zinc</keyword>
<keyword id="KW-0863">Zinc-finger</keyword>
<gene>
    <name type="primary">znf385b</name>
    <name type="synonym">znf533</name>
</gene>
<feature type="chain" id="PRO_0000191814" description="Zinc finger protein 385B">
    <location>
        <begin position="1"/>
        <end position="492"/>
    </location>
</feature>
<feature type="zinc finger region" description="Matrin-type 1">
    <location>
        <begin position="8"/>
        <end position="44"/>
    </location>
</feature>
<feature type="zinc finger region" description="Matrin-type 2">
    <location>
        <begin position="143"/>
        <end position="173"/>
    </location>
</feature>
<feature type="zinc finger region" description="Matrin-type 3">
    <location>
        <begin position="303"/>
        <end position="337"/>
    </location>
</feature>
<feature type="zinc finger region" description="Matrin-type 4">
    <location>
        <begin position="371"/>
        <end position="401"/>
    </location>
</feature>
<feature type="region of interest" description="Disordered" evidence="2">
    <location>
        <begin position="159"/>
        <end position="206"/>
    </location>
</feature>
<feature type="region of interest" description="Disordered" evidence="2">
    <location>
        <begin position="388"/>
        <end position="420"/>
    </location>
</feature>
<feature type="compositionally biased region" description="Low complexity" evidence="2">
    <location>
        <begin position="189"/>
        <end position="206"/>
    </location>
</feature>
<proteinExistence type="evidence at transcript level"/>
<sequence>MQLQQEKKKLLYSLCDVCNIQLHSAAQAQVHYNGKSHLKRVKQLNNGEVPKASASLAPTSLQSLSSSSSQGSSCHSNTLPTLVRTPSLMMQSGLDMKPFMTFPVESSSPVGLFPNFNTMDPVQKAVINHTFGVSIPPKKKQVISCNICQLRFNSDSQAEAHYKGSKHAKKLKAQESPKNKQKSAVAQDSGTKTITSTSTNTTTTTTTTSSCTAVTASCSDQTEKSTEPLAAHKVPASPQAFVPAPVAPAVALVPSPCKTAPVHASPPTEPTGLAVALKNTSKPAALPTAPSEPSVESEEEKAKKLLYCSLCKVAVNSLSQLEAHNTGSKHKTMLEARNGAGPIKAYPRPGSKLKVQATQLNKGSGLQNKTFHCEICDVHVNSEIQLKQHISSRRHKDRVAGKPTKPKYSPYNKQQRSSSSLAAKLALQNDLVKPISPAFLPSPFSTTTVPSISLHPRPNTSIFQTASLPHSFLRAAPGPIRPTTGSILFAPY</sequence>